<comment type="function">
    <molecule>Mature tail spike protein</molecule>
    <text evidence="8 10">Receptor binding protein, which mediates the attachment to the host capsule (PubMed:20096705, PubMed:3546309). Degrades the alpha-2,8-linked polysialic acid of E.coli K1 capsule by cleaving within the polymer chain of polysialic acid (PubMed:3546309).</text>
</comment>
<comment type="function">
    <molecule>Intramolecular chaperone</molecule>
    <text evidence="5">The C-terminal chaperone protein mediates homotrimerization and proper folding of the catalytic endo-N trimer.</text>
</comment>
<comment type="catalytic activity">
    <molecule>Mature tail spike protein</molecule>
    <reaction evidence="5 7 10">
        <text>Endohydrolysis of (2-&gt;8)-alpha-sialosyl linkages in oligo- or poly(sialic) acids.</text>
        <dbReference type="EC" id="3.2.1.129"/>
    </reaction>
</comment>
<comment type="biophysicochemical properties">
    <molecule>Mature tail spike protein</molecule>
    <kinetics>
        <KM evidence="10">71 uM for poly-alpha-2,8-sialosyl carbohydrates</KM>
        <KM evidence="10">1.2 mM for oligo-alpha-2,8-sialosyl carbohydrates</KM>
        <KM evidence="10">7.1 uM for poly-alpha-2,8-alpha-2,9-sialosyl carbohydrates</KM>
        <Vmax evidence="10">19.0 umol/min/mg enzyme for poly-alpha-2,8-sialosyl carbohydrates cleavage</Vmax>
        <Vmax evidence="10">18.0 umol/min/mg enzyme for oligo-alpha-2,8-sialosyl carbohydrates cleavage</Vmax>
        <Vmax evidence="10">13.0 umol/min/mg enzyme for poly-alpha-2,8-alpha-2,9-sialosyl carbohydrates</Vmax>
    </kinetics>
</comment>
<comment type="subunit">
    <molecule>Mature tail spike protein</molecule>
    <text evidence="6 8 9 10">Homotrimer (PubMed:20124697, PubMed:3546309). Interacts with sialic acid (PubMed:15608653, PubMed:20096705).</text>
</comment>
<comment type="interaction">
    <interactant intactId="EBI-15829658">
        <id>Q04830</id>
    </interactant>
    <interactant intactId="EBI-15829658">
        <id>Q04830</id>
        <label>-</label>
    </interactant>
    <organismsDiffer>false</organismsDiffer>
    <experiments>2</experiments>
</comment>
<comment type="subcellular location">
    <molecule>Mature tail spike protein</molecule>
    <subcellularLocation>
        <location evidence="11">Virion</location>
    </subcellularLocation>
    <text evidence="11">Tail spike.</text>
</comment>
<comment type="PTM">
    <molecule>Tail spike protein</molecule>
    <text evidence="2 5 7">Proteolytic cleavage and release of the chaperone in the host cytosol stabilizes the folded protein (PubMed:12556457, PubMed:19189967). The cleavage gives rise to the mature tail spike protein but is not essential for catalytic activity (By similarity). However, release of the chaperone domain confers kinetic stability and processivity to the endosialidase (PubMed:19189967).</text>
</comment>
<comment type="similarity">
    <text evidence="12">Belongs to the glycosyl hydrolase 58 family.</text>
</comment>
<comment type="sequence caution" evidence="12">
    <conflict type="frameshift">
        <sequence resource="EMBL-CDS" id="AAC37340"/>
    </conflict>
</comment>
<dbReference type="EC" id="3.2.1.129" evidence="5 7 10"/>
<dbReference type="EMBL" id="M63657">
    <property type="protein sequence ID" value="AAC37340.1"/>
    <property type="status" value="ALT_FRAME"/>
    <property type="molecule type" value="Unassigned_DNA"/>
</dbReference>
<dbReference type="EMBL" id="AJ505988">
    <property type="protein sequence ID" value="CAD44528.2"/>
    <property type="molecule type" value="Genomic_DNA"/>
</dbReference>
<dbReference type="EMBL" id="DQ111067">
    <property type="protein sequence ID" value="AAZ73001.1"/>
    <property type="molecule type" value="Genomic_DNA"/>
</dbReference>
<dbReference type="EMBL" id="AM084414">
    <property type="protein sequence ID" value="CAJ29390.1"/>
    <property type="molecule type" value="Genomic_DNA"/>
</dbReference>
<dbReference type="PIR" id="A36887">
    <property type="entry name" value="A36887"/>
</dbReference>
<dbReference type="RefSeq" id="YP_338127.1">
    <property type="nucleotide sequence ID" value="NC_007456.1"/>
</dbReference>
<dbReference type="RefSeq" id="YP_424959.1">
    <property type="nucleotide sequence ID" value="NC_007636.1"/>
</dbReference>
<dbReference type="PDB" id="1V0E">
    <property type="method" value="X-ray"/>
    <property type="resolution" value="1.90 A"/>
    <property type="chains" value="A/B/C/D/E/F=246-910"/>
</dbReference>
<dbReference type="PDB" id="1V0F">
    <property type="method" value="X-ray"/>
    <property type="resolution" value="2.55 A"/>
    <property type="chains" value="A/B/C/D/E/F=246-910"/>
</dbReference>
<dbReference type="PDB" id="3GVJ">
    <property type="method" value="X-ray"/>
    <property type="resolution" value="1.48 A"/>
    <property type="chains" value="A=246-910"/>
</dbReference>
<dbReference type="PDB" id="3GVK">
    <property type="method" value="X-ray"/>
    <property type="resolution" value="1.84 A"/>
    <property type="chains" value="A/B/C=246-910"/>
</dbReference>
<dbReference type="PDB" id="3GVL">
    <property type="method" value="X-ray"/>
    <property type="resolution" value="1.41 A"/>
    <property type="chains" value="A=246-910"/>
</dbReference>
<dbReference type="PDB" id="3GW6">
    <property type="method" value="X-ray"/>
    <property type="resolution" value="2.60 A"/>
    <property type="chains" value="A/B/C/D/E/F=790-1064"/>
</dbReference>
<dbReference type="PDB" id="3JU4">
    <property type="method" value="X-ray"/>
    <property type="resolution" value="0.98 A"/>
    <property type="chains" value="A=246-910"/>
</dbReference>
<dbReference type="PDBsum" id="1V0E"/>
<dbReference type="PDBsum" id="1V0F"/>
<dbReference type="PDBsum" id="3GVJ"/>
<dbReference type="PDBsum" id="3GVK"/>
<dbReference type="PDBsum" id="3GVL"/>
<dbReference type="PDBsum" id="3GW6"/>
<dbReference type="PDBsum" id="3JU4"/>
<dbReference type="SMR" id="Q04830"/>
<dbReference type="DIP" id="DIP-48774N"/>
<dbReference type="DrugBank" id="DB03721">
    <property type="generic name" value="N-acetyl-alpha-neuraminic acid"/>
</dbReference>
<dbReference type="DrugBank" id="DB04265">
    <property type="generic name" value="N-acetyl-beta-neuraminic acid"/>
</dbReference>
<dbReference type="CAZy" id="GH58">
    <property type="family name" value="Glycoside Hydrolase Family 58"/>
</dbReference>
<dbReference type="MEROPS" id="S74.001"/>
<dbReference type="GeneID" id="3707741"/>
<dbReference type="GeneID" id="54967421"/>
<dbReference type="KEGG" id="vg:3707741"/>
<dbReference type="OrthoDB" id="303at10239"/>
<dbReference type="BRENDA" id="3.2.1.129">
    <property type="organism ID" value="716"/>
</dbReference>
<dbReference type="SABIO-RK" id="Q04830"/>
<dbReference type="EvolutionaryTrace" id="Q04830"/>
<dbReference type="Proteomes" id="UP000001530">
    <property type="component" value="Genome"/>
</dbReference>
<dbReference type="Proteomes" id="UP000001722">
    <property type="component" value="Genome"/>
</dbReference>
<dbReference type="GO" id="GO:0098024">
    <property type="term" value="C:virus tail, fiber"/>
    <property type="evidence" value="ECO:0000314"/>
    <property type="project" value="UniProtKB"/>
</dbReference>
<dbReference type="GO" id="GO:0016996">
    <property type="term" value="F:endo-alpha-(2,8)-sialidase activity"/>
    <property type="evidence" value="ECO:0000314"/>
    <property type="project" value="UniProtKB"/>
</dbReference>
<dbReference type="GO" id="GO:0042802">
    <property type="term" value="F:identical protein binding"/>
    <property type="evidence" value="ECO:0000353"/>
    <property type="project" value="IntAct"/>
</dbReference>
<dbReference type="GO" id="GO:0098671">
    <property type="term" value="P:adhesion receptor-mediated virion attachment to host cell"/>
    <property type="evidence" value="ECO:0007669"/>
    <property type="project" value="UniProtKB-KW"/>
</dbReference>
<dbReference type="GO" id="GO:0044409">
    <property type="term" value="P:symbiont entry into host"/>
    <property type="evidence" value="ECO:0000314"/>
    <property type="project" value="UniProtKB"/>
</dbReference>
<dbReference type="GO" id="GO:0098994">
    <property type="term" value="P:symbiont entry into host cell via disruption of host cell envelope"/>
    <property type="evidence" value="ECO:0007669"/>
    <property type="project" value="UniProtKB-KW"/>
</dbReference>
<dbReference type="GO" id="GO:0098996">
    <property type="term" value="P:symbiont entry into host cell via disruption of host cell glycocalyx"/>
    <property type="evidence" value="ECO:0007669"/>
    <property type="project" value="UniProtKB-KW"/>
</dbReference>
<dbReference type="GO" id="GO:0019062">
    <property type="term" value="P:virion attachment to host cell"/>
    <property type="evidence" value="ECO:0000314"/>
    <property type="project" value="UniProtKB"/>
</dbReference>
<dbReference type="CDD" id="cd10144">
    <property type="entry name" value="Peptidase_S74_CIMCD"/>
    <property type="match status" value="1"/>
</dbReference>
<dbReference type="FunFam" id="4.10.1090.10:FF:000001">
    <property type="entry name" value="Tail spike protein"/>
    <property type="match status" value="1"/>
</dbReference>
<dbReference type="Gene3D" id="2.10.10.80">
    <property type="match status" value="1"/>
</dbReference>
<dbReference type="Gene3D" id="2.120.10.10">
    <property type="match status" value="1"/>
</dbReference>
<dbReference type="Gene3D" id="2.40.30.20">
    <property type="match status" value="1"/>
</dbReference>
<dbReference type="Gene3D" id="1.20.5.100">
    <property type="entry name" value="Cytochrome c1, transmembrane anchor, C-terminal"/>
    <property type="match status" value="1"/>
</dbReference>
<dbReference type="Gene3D" id="1.20.5.1240">
    <property type="entry name" value="Endo-n-acetylneuraminidase"/>
    <property type="match status" value="1"/>
</dbReference>
<dbReference type="Gene3D" id="3.30.2460.10">
    <property type="entry name" value="Endo-n-acetylneuraminidase domain"/>
    <property type="match status" value="1"/>
</dbReference>
<dbReference type="Gene3D" id="4.10.1090.10">
    <property type="entry name" value="Endosialidase, domain 4"/>
    <property type="match status" value="1"/>
</dbReference>
<dbReference type="Gene3D" id="3.30.750.60">
    <property type="entry name" value="Endosialidase, N-terminal extension domain"/>
    <property type="match status" value="1"/>
</dbReference>
<dbReference type="InterPro" id="IPR023366">
    <property type="entry name" value="ATP_synth_asu-like_sf"/>
</dbReference>
<dbReference type="InterPro" id="IPR024427">
    <property type="entry name" value="Endosialidase_beta_barrel"/>
</dbReference>
<dbReference type="InterPro" id="IPR024428">
    <property type="entry name" value="Endosialidase_beta_prop"/>
</dbReference>
<dbReference type="InterPro" id="IPR024430">
    <property type="entry name" value="Endosialidase_C_dom"/>
</dbReference>
<dbReference type="InterPro" id="IPR044914">
    <property type="entry name" value="Endosialidase_C_dom_sf"/>
</dbReference>
<dbReference type="InterPro" id="IPR024429">
    <property type="entry name" value="Endosialidase_N-extension"/>
</dbReference>
<dbReference type="InterPro" id="IPR001724">
    <property type="entry name" value="Glycl_Hydrolase_58"/>
</dbReference>
<dbReference type="InterPro" id="IPR005604">
    <property type="entry name" value="Phage_T7_tail_fibre-like_N"/>
</dbReference>
<dbReference type="InterPro" id="IPR030392">
    <property type="entry name" value="S74_ICA"/>
</dbReference>
<dbReference type="InterPro" id="IPR036278">
    <property type="entry name" value="Sialidase_sf"/>
</dbReference>
<dbReference type="InterPro" id="IPR040775">
    <property type="entry name" value="Tail_spike_N"/>
</dbReference>
<dbReference type="Pfam" id="PF12195">
    <property type="entry name" value="End_beta_barrel"/>
    <property type="match status" value="1"/>
</dbReference>
<dbReference type="Pfam" id="PF12217">
    <property type="entry name" value="End_beta_propel"/>
    <property type="match status" value="1"/>
</dbReference>
<dbReference type="Pfam" id="PF12218">
    <property type="entry name" value="End_N_terminal"/>
    <property type="match status" value="1"/>
</dbReference>
<dbReference type="Pfam" id="PF12219">
    <property type="entry name" value="End_tail_spike"/>
    <property type="match status" value="1"/>
</dbReference>
<dbReference type="Pfam" id="PF13884">
    <property type="entry name" value="Peptidase_S74"/>
    <property type="match status" value="1"/>
</dbReference>
<dbReference type="Pfam" id="PF03906">
    <property type="entry name" value="Phage_T7_tail"/>
    <property type="match status" value="1"/>
</dbReference>
<dbReference type="Pfam" id="PF18668">
    <property type="entry name" value="Tail_spike_N"/>
    <property type="match status" value="1"/>
</dbReference>
<dbReference type="PRINTS" id="PR00849">
    <property type="entry name" value="GLHYDRLASE58"/>
</dbReference>
<dbReference type="SUPFAM" id="SSF69349">
    <property type="entry name" value="Phage fibre proteins"/>
    <property type="match status" value="1"/>
</dbReference>
<dbReference type="SUPFAM" id="SSF50939">
    <property type="entry name" value="Sialidases"/>
    <property type="match status" value="1"/>
</dbReference>
<dbReference type="PROSITE" id="PS51688">
    <property type="entry name" value="ICA"/>
    <property type="match status" value="1"/>
</dbReference>
<organismHost>
    <name type="scientific">Escherichia coli</name>
    <dbReference type="NCBI Taxonomy" id="562"/>
</organismHost>
<sequence length="1064" mass="118905">MSTITQFPSGNTQYRIEFDYLARTFVVVTLVNSSNPTLNRVLEVGRDYRFLNPTMIEMLVDQSGFDIVRIHRQTGTDLVVDFRNGSVLTASDLTTAELQAIHIAEEGRDQTVDLAKEYADAAGSSAGNAKDSEDEARRIAESIRAAGLIGYMTRRSFEKGYNVTTWSEVLLWEEDGDYYRWDGTLPKNVPAGSTPETSGGIGLGAWVSVGDAALRSQISNPEGAILYPELHRARWLDEKDARGWGAKGDGVTDDTAALTSALNDTPVGQKINGNGKTYKVTSLPDISRFINTRFVYERIPGQPLYYASEEFVQGELFKITDTPYYNAWPQDKAFVYENVIYAPYMGSDRHGVSRLHVSWVKSGDDGQTWSTPEWLTDLHPDYPTVNYHCMSMGVCRNRLFAMIETRTLAKNALTNCALWDRPMSRSLHLTGGITKAANQRYATIHVPDHGLFVGDFVNFSNSAVTGVSGDMTVATVIDKDNFTVLTPNQQTSDLNNAGKNWHMGTSFHKSPWRKTDLGLIPSVTEVHSFATIDNNGFAMGYHQGDVAPREVGLFYFPDAFNSPSNYVRRQIPSEYEPDASEPCIKYYDGVLYLITRGTRGDRLGSSLHRSRDIGQTWESLRFPHNVHHTTLPFAKVGDDLIMFGSERAENEWEAGAPDDRYKASYPRTFYARLNVNNWNADDIEWVNITDQIYQGGIVNSGVGVGSVVVKDNYIYYMFGGEDHFNPWTYGDNSAKDPFKSDGHPSDLYCYKMKIGPDNRVSRDFRYGAVPNRAVPVFFDTNGVRTVPAPMEFTGDLGLGHVTIRASTSSNIRSEVLMEGEYGFIGKSIPTDNPAGQRIIFCGGEGTSSTTGAQITLYGANNTDSRRIVYNGDEHLFQSADVKPYNDNVTALGGPSNRFTTAYLGSNPIVTSNGERKTEPVVFDDAFLDAWGDVHYIMYQWLDAVQLKGNDARIHFGVIAQQIRDVFIAHGLMDENSTNCRYAVLCYDKYPRMTDTVFSHNEIVEHTDEEGNVTTTEEPVYTEVVIHEEGEEWGVRPDGIFFAEAAYQRRKLERIEARLSALEQK</sequence>
<evidence type="ECO:0000250" key="1">
    <source>
        <dbReference type="UniProtKB" id="O09496"/>
    </source>
</evidence>
<evidence type="ECO:0000250" key="2">
    <source>
        <dbReference type="UniProtKB" id="P49714"/>
    </source>
</evidence>
<evidence type="ECO:0000255" key="3"/>
<evidence type="ECO:0000255" key="4">
    <source>
        <dbReference type="PROSITE-ProRule" id="PRU01025"/>
    </source>
</evidence>
<evidence type="ECO:0000269" key="5">
    <source>
    </source>
</evidence>
<evidence type="ECO:0000269" key="6">
    <source>
    </source>
</evidence>
<evidence type="ECO:0000269" key="7">
    <source>
    </source>
</evidence>
<evidence type="ECO:0000269" key="8">
    <source>
    </source>
</evidence>
<evidence type="ECO:0000269" key="9">
    <source>
    </source>
</evidence>
<evidence type="ECO:0000269" key="10">
    <source>
    </source>
</evidence>
<evidence type="ECO:0000269" key="11">
    <source>
    </source>
</evidence>
<evidence type="ECO:0000305" key="12"/>
<evidence type="ECO:0000305" key="13">
    <source>
    </source>
</evidence>
<evidence type="ECO:0007744" key="14">
    <source>
        <dbReference type="PDB" id="1V0E"/>
    </source>
</evidence>
<evidence type="ECO:0007744" key="15">
    <source>
        <dbReference type="PDB" id="1V0F"/>
    </source>
</evidence>
<evidence type="ECO:0007744" key="16">
    <source>
        <dbReference type="PDB" id="3GVJ"/>
    </source>
</evidence>
<evidence type="ECO:0007744" key="17">
    <source>
        <dbReference type="PDB" id="3GVK"/>
    </source>
</evidence>
<evidence type="ECO:0007744" key="18">
    <source>
        <dbReference type="PDB" id="3GVL"/>
    </source>
</evidence>
<evidence type="ECO:0007744" key="19">
    <source>
        <dbReference type="PDB" id="3JU4"/>
    </source>
</evidence>
<evidence type="ECO:0007829" key="20">
    <source>
        <dbReference type="PDB" id="3GVK"/>
    </source>
</evidence>
<evidence type="ECO:0007829" key="21">
    <source>
        <dbReference type="PDB" id="3GW6"/>
    </source>
</evidence>
<evidence type="ECO:0007829" key="22">
    <source>
        <dbReference type="PDB" id="3JU4"/>
    </source>
</evidence>
<protein>
    <recommendedName>
        <fullName evidence="12">Tail spike protein</fullName>
        <shortName>TSP</shortName>
    </recommendedName>
    <alternativeName>
        <fullName>Endo-N-acetylneuraminidase</fullName>
        <shortName>Endo-N</shortName>
    </alternativeName>
    <alternativeName>
        <fullName evidence="12">Endo-alpha-sialidase</fullName>
        <ecNumber evidence="5 7 10">3.2.1.129</ecNumber>
    </alternativeName>
    <alternativeName>
        <fullName>EndoNF</fullName>
    </alternativeName>
    <alternativeName>
        <fullName>G102</fullName>
    </alternativeName>
    <component>
        <recommendedName>
            <fullName evidence="2">Mature tail spike protein</fullName>
        </recommendedName>
    </component>
    <component>
        <recommendedName>
            <fullName evidence="2">Intramolecular chaperone</fullName>
        </recommendedName>
    </component>
</protein>
<feature type="initiator methionine" description="Removed; by host" evidence="11">
    <location>
        <position position="1"/>
    </location>
</feature>
<feature type="chain" id="PRO_0000057709" description="Tail spike protein">
    <location>
        <begin position="2"/>
        <end position="1064"/>
    </location>
</feature>
<feature type="chain" id="PRO_0000458688" description="Mature tail spike protein">
    <location>
        <begin position="2"/>
        <end position="911"/>
    </location>
</feature>
<feature type="chain" id="PRO_0000438182" description="Intramolecular chaperone" evidence="13">
    <location>
        <begin position="912"/>
        <end position="1064"/>
    </location>
</feature>
<feature type="repeat" description="BNR 1">
    <location>
        <begin position="360"/>
        <end position="371"/>
    </location>
</feature>
<feature type="repeat" description="BNR 2">
    <location>
        <begin position="496"/>
        <end position="503"/>
    </location>
</feature>
<feature type="repeat" description="BNR 3">
    <location>
        <begin position="608"/>
        <end position="619"/>
    </location>
</feature>
<feature type="domain" description="Peptidase S74" evidence="4">
    <location>
        <begin position="911"/>
        <end position="1064"/>
    </location>
</feature>
<feature type="coiled-coil region" evidence="3">
    <location>
        <begin position="1044"/>
        <end position="1064"/>
    </location>
</feature>
<feature type="active site" evidence="6 8">
    <location>
        <position position="581"/>
    </location>
</feature>
<feature type="active site" evidence="6">
    <location>
        <position position="596"/>
    </location>
</feature>
<feature type="active site" evidence="6 8">
    <location>
        <position position="647"/>
    </location>
</feature>
<feature type="site" description="Binding to sialic acid" evidence="8">
    <location>
        <position position="542"/>
    </location>
</feature>
<feature type="site" description="Binding to sialic acid" evidence="8">
    <location>
        <position position="545"/>
    </location>
</feature>
<feature type="site" description="Binding to sialic acid" evidence="8">
    <location>
        <position position="549"/>
    </location>
</feature>
<feature type="site" description="Binding to sialic acid" evidence="8">
    <location>
        <position position="578"/>
    </location>
</feature>
<feature type="site" description="Binding to sialic acid" evidence="8">
    <location>
        <position position="598"/>
    </location>
</feature>
<feature type="site" description="Binding to sialic acid" evidence="8">
    <location>
        <position position="599"/>
    </location>
</feature>
<feature type="site" description="Cleavage; by autolysis" evidence="1">
    <location>
        <begin position="911"/>
        <end position="912"/>
    </location>
</feature>
<feature type="mutagenesis site" description="Almost complete loss of enzymatic activity." evidence="8">
    <original>W</original>
    <variation>R</variation>
    <location>
        <position position="328"/>
    </location>
</feature>
<feature type="mutagenesis site" description="Almost complete loss of enzymatic activity." evidence="8">
    <original>H</original>
    <variation>A</variation>
    <variation>N</variation>
    <variation>Q</variation>
    <location>
        <position position="350"/>
    </location>
</feature>
<feature type="mutagenesis site" description="80% loss of enzymatic activity." evidence="8">
    <original>K</original>
    <variation>A</variation>
    <location>
        <position position="410"/>
    </location>
</feature>
<feature type="mutagenesis site" description="60% loss of enzymatic activity." evidence="8">
    <original>H</original>
    <variation>A</variation>
    <location>
        <position position="542"/>
    </location>
</feature>
<feature type="mutagenesis site" description="Almost complete loss of enzymatic activity." evidence="8">
    <original>R</original>
    <variation>A</variation>
    <location>
        <position position="549"/>
    </location>
</feature>
<feature type="mutagenesis site" description="Almost complete loss of enzymatic activity." evidence="6 8">
    <original>E</original>
    <variation>A</variation>
    <location>
        <position position="581"/>
    </location>
</feature>
<feature type="mutagenesis site" description="Complete loss of enzymatic activity; when associated with A-581. Complete loss of enzymatic activity; when associated with A-647." evidence="6">
    <original>R</original>
    <variation>A</variation>
    <location>
        <position position="596"/>
    </location>
</feature>
<feature type="mutagenesis site" description="Almost complete loss of enzymatic activity." evidence="6 8">
    <original>R</original>
    <variation>A</variation>
    <location>
        <position position="647"/>
    </location>
</feature>
<feature type="mutagenesis site" description="Complete loss of proteolytic processing. 190-fold reduced enzymatic activity." evidence="7">
    <original>S</original>
    <variation>A</variation>
    <location>
        <position position="911"/>
    </location>
</feature>
<feature type="sequence conflict" description="In Ref. 1; AAC37340." evidence="12" ref="1">
    <original>H</original>
    <variation>R</variation>
    <location>
        <position position="628"/>
    </location>
</feature>
<feature type="strand" evidence="22">
    <location>
        <begin position="249"/>
        <end position="253"/>
    </location>
</feature>
<feature type="helix" evidence="22">
    <location>
        <begin position="255"/>
        <end position="264"/>
    </location>
</feature>
<feature type="strand" evidence="22">
    <location>
        <begin position="277"/>
        <end position="279"/>
    </location>
</feature>
<feature type="helix" evidence="22">
    <location>
        <begin position="286"/>
        <end position="288"/>
    </location>
</feature>
<feature type="strand" evidence="22">
    <location>
        <begin position="289"/>
        <end position="291"/>
    </location>
</feature>
<feature type="strand" evidence="22">
    <location>
        <begin position="293"/>
        <end position="296"/>
    </location>
</feature>
<feature type="strand" evidence="22">
    <location>
        <begin position="304"/>
        <end position="307"/>
    </location>
</feature>
<feature type="strand" evidence="22">
    <location>
        <begin position="311"/>
        <end position="318"/>
    </location>
</feature>
<feature type="strand" evidence="22">
    <location>
        <begin position="323"/>
        <end position="327"/>
    </location>
</feature>
<feature type="strand" evidence="22">
    <location>
        <begin position="334"/>
        <end position="336"/>
    </location>
</feature>
<feature type="strand" evidence="22">
    <location>
        <begin position="339"/>
        <end position="352"/>
    </location>
</feature>
<feature type="strand" evidence="22">
    <location>
        <begin position="356"/>
        <end position="364"/>
    </location>
</feature>
<feature type="strand" evidence="20">
    <location>
        <begin position="373"/>
        <end position="376"/>
    </location>
</feature>
<feature type="turn" evidence="22">
    <location>
        <begin position="380"/>
        <end position="384"/>
    </location>
</feature>
<feature type="strand" evidence="22">
    <location>
        <begin position="385"/>
        <end position="388"/>
    </location>
</feature>
<feature type="strand" evidence="22">
    <location>
        <begin position="392"/>
        <end position="395"/>
    </location>
</feature>
<feature type="strand" evidence="22">
    <location>
        <begin position="398"/>
        <end position="407"/>
    </location>
</feature>
<feature type="turn" evidence="22">
    <location>
        <begin position="408"/>
        <end position="410"/>
    </location>
</feature>
<feature type="strand" evidence="22">
    <location>
        <begin position="413"/>
        <end position="422"/>
    </location>
</feature>
<feature type="strand" evidence="22">
    <location>
        <begin position="426"/>
        <end position="431"/>
    </location>
</feature>
<feature type="strand" evidence="22">
    <location>
        <begin position="433"/>
        <end position="435"/>
    </location>
</feature>
<feature type="strand" evidence="22">
    <location>
        <begin position="441"/>
        <end position="445"/>
    </location>
</feature>
<feature type="strand" evidence="22">
    <location>
        <begin position="456"/>
        <end position="461"/>
    </location>
</feature>
<feature type="strand" evidence="22">
    <location>
        <begin position="469"/>
        <end position="472"/>
    </location>
</feature>
<feature type="strand" evidence="22">
    <location>
        <begin position="475"/>
        <end position="478"/>
    </location>
</feature>
<feature type="strand" evidence="22">
    <location>
        <begin position="481"/>
        <end position="485"/>
    </location>
</feature>
<feature type="strand" evidence="22">
    <location>
        <begin position="500"/>
        <end position="505"/>
    </location>
</feature>
<feature type="strand" evidence="22">
    <location>
        <begin position="513"/>
        <end position="516"/>
    </location>
</feature>
<feature type="strand" evidence="22">
    <location>
        <begin position="524"/>
        <end position="531"/>
    </location>
</feature>
<feature type="strand" evidence="22">
    <location>
        <begin position="533"/>
        <end position="535"/>
    </location>
</feature>
<feature type="strand" evidence="22">
    <location>
        <begin position="537"/>
        <end position="543"/>
    </location>
</feature>
<feature type="strand" evidence="22">
    <location>
        <begin position="545"/>
        <end position="548"/>
    </location>
</feature>
<feature type="strand" evidence="22">
    <location>
        <begin position="550"/>
        <end position="556"/>
    </location>
</feature>
<feature type="turn" evidence="22">
    <location>
        <begin position="557"/>
        <end position="561"/>
    </location>
</feature>
<feature type="strand" evidence="22">
    <location>
        <begin position="567"/>
        <end position="570"/>
    </location>
</feature>
<feature type="helix" evidence="22">
    <location>
        <begin position="573"/>
        <end position="575"/>
    </location>
</feature>
<feature type="strand" evidence="22">
    <location>
        <begin position="579"/>
        <end position="587"/>
    </location>
</feature>
<feature type="strand" evidence="22">
    <location>
        <begin position="590"/>
        <end position="598"/>
    </location>
</feature>
<feature type="strand" evidence="22">
    <location>
        <begin position="606"/>
        <end position="612"/>
    </location>
</feature>
<feature type="strand" evidence="22">
    <location>
        <begin position="618"/>
        <end position="621"/>
    </location>
</feature>
<feature type="strand" evidence="22">
    <location>
        <begin position="633"/>
        <end position="636"/>
    </location>
</feature>
<feature type="strand" evidence="22">
    <location>
        <begin position="639"/>
        <end position="645"/>
    </location>
</feature>
<feature type="strand" evidence="22">
    <location>
        <begin position="667"/>
        <end position="674"/>
    </location>
</feature>
<feature type="turn" evidence="22">
    <location>
        <begin position="675"/>
        <end position="677"/>
    </location>
</feature>
<feature type="strand" evidence="22">
    <location>
        <begin position="686"/>
        <end position="690"/>
    </location>
</feature>
<feature type="strand" evidence="22">
    <location>
        <begin position="696"/>
        <end position="698"/>
    </location>
</feature>
<feature type="strand" evidence="22">
    <location>
        <begin position="702"/>
        <end position="710"/>
    </location>
</feature>
<feature type="strand" evidence="22">
    <location>
        <begin position="713"/>
        <end position="721"/>
    </location>
</feature>
<feature type="turn" evidence="22">
    <location>
        <begin position="728"/>
        <end position="734"/>
    </location>
</feature>
<feature type="strand" evidence="22">
    <location>
        <begin position="746"/>
        <end position="753"/>
    </location>
</feature>
<feature type="strand" evidence="22">
    <location>
        <begin position="772"/>
        <end position="774"/>
    </location>
</feature>
<feature type="strand" evidence="20">
    <location>
        <begin position="784"/>
        <end position="786"/>
    </location>
</feature>
<feature type="strand" evidence="20">
    <location>
        <begin position="790"/>
        <end position="792"/>
    </location>
</feature>
<feature type="strand" evidence="20">
    <location>
        <begin position="796"/>
        <end position="803"/>
    </location>
</feature>
<feature type="turn" evidence="22">
    <location>
        <begin position="808"/>
        <end position="811"/>
    </location>
</feature>
<feature type="strand" evidence="20">
    <location>
        <begin position="812"/>
        <end position="817"/>
    </location>
</feature>
<feature type="strand" evidence="20">
    <location>
        <begin position="819"/>
        <end position="826"/>
    </location>
</feature>
<feature type="helix" evidence="22">
    <location>
        <begin position="833"/>
        <end position="835"/>
    </location>
</feature>
<feature type="strand" evidence="22">
    <location>
        <begin position="837"/>
        <end position="847"/>
    </location>
</feature>
<feature type="helix" evidence="22">
    <location>
        <begin position="848"/>
        <end position="850"/>
    </location>
</feature>
<feature type="strand" evidence="22">
    <location>
        <begin position="853"/>
        <end position="857"/>
    </location>
</feature>
<feature type="strand" evidence="22">
    <location>
        <begin position="861"/>
        <end position="863"/>
    </location>
</feature>
<feature type="strand" evidence="22">
    <location>
        <begin position="867"/>
        <end position="870"/>
    </location>
</feature>
<feature type="strand" evidence="20">
    <location>
        <begin position="872"/>
        <end position="879"/>
    </location>
</feature>
<feature type="strand" evidence="22">
    <location>
        <begin position="884"/>
        <end position="889"/>
    </location>
</feature>
<feature type="strand" evidence="22">
    <location>
        <begin position="891"/>
        <end position="893"/>
    </location>
</feature>
<feature type="strand" evidence="20">
    <location>
        <begin position="901"/>
        <end position="905"/>
    </location>
</feature>
<feature type="helix" evidence="21">
    <location>
        <begin position="924"/>
        <end position="930"/>
    </location>
</feature>
<feature type="strand" evidence="21">
    <location>
        <begin position="936"/>
        <end position="938"/>
    </location>
</feature>
<feature type="helix" evidence="21">
    <location>
        <begin position="941"/>
        <end position="947"/>
    </location>
</feature>
<feature type="helix" evidence="21">
    <location>
        <begin position="948"/>
        <end position="950"/>
    </location>
</feature>
<feature type="strand" evidence="21">
    <location>
        <begin position="953"/>
        <end position="956"/>
    </location>
</feature>
<feature type="helix" evidence="21">
    <location>
        <begin position="959"/>
        <end position="968"/>
    </location>
</feature>
<feature type="strand" evidence="21">
    <location>
        <begin position="984"/>
        <end position="989"/>
    </location>
</feature>
<feature type="strand" evidence="21">
    <location>
        <begin position="992"/>
        <end position="1006"/>
    </location>
</feature>
<feature type="strand" evidence="21">
    <location>
        <begin position="1008"/>
        <end position="1010"/>
    </location>
</feature>
<feature type="strand" evidence="21">
    <location>
        <begin position="1012"/>
        <end position="1026"/>
    </location>
</feature>
<feature type="strand" evidence="21">
    <location>
        <begin position="1029"/>
        <end position="1034"/>
    </location>
</feature>
<feature type="helix" evidence="21">
    <location>
        <begin position="1036"/>
        <end position="1059"/>
    </location>
</feature>
<accession>Q04830</accession>
<accession>Q2WC71</accession>
<accession>Q858B1</accession>
<proteinExistence type="evidence at protein level"/>
<name>FIBER_BPK1F</name>
<organism>
    <name type="scientific">Escherichia phage K1F</name>
    <name type="common">Bacteriophage K1F</name>
    <dbReference type="NCBI Taxonomy" id="344021"/>
    <lineage>
        <taxon>Viruses</taxon>
        <taxon>Duplodnaviria</taxon>
        <taxon>Heunggongvirae</taxon>
        <taxon>Uroviricota</taxon>
        <taxon>Caudoviricetes</taxon>
        <taxon>Autographiviridae</taxon>
        <taxon>Studiervirinae</taxon>
        <taxon>Kayfunavirus</taxon>
        <taxon>Kayfunavirus K1F</taxon>
    </lineage>
</organism>
<keyword id="KW-0002">3D-structure</keyword>
<keyword id="KW-0175">Coiled coil</keyword>
<keyword id="KW-1238">Degradation of host capsule during virus entry</keyword>
<keyword id="KW-1235">Degradation of host cell envelope components during virus entry</keyword>
<keyword id="KW-0903">Direct protein sequencing</keyword>
<keyword id="KW-0326">Glycosidase</keyword>
<keyword id="KW-0945">Host-virus interaction</keyword>
<keyword id="KW-0378">Hydrolase</keyword>
<keyword id="KW-1185">Reference proteome</keyword>
<keyword id="KW-0677">Repeat</keyword>
<keyword id="KW-1233">Viral attachment to host adhesion receptor</keyword>
<keyword id="KW-1161">Viral attachment to host cell</keyword>
<keyword id="KW-1230">Viral tail fiber protein</keyword>
<keyword id="KW-1227">Viral tail protein</keyword>
<keyword id="KW-0946">Virion</keyword>
<keyword id="KW-1160">Virus entry into host cell</keyword>
<reference key="1">
    <citation type="journal article" date="1993" name="J. Bacteriol.">
        <title>Complete nucleotide sequence of the bacteriophage K1F tail gene encoding endo-N-acylneuraminidase (endo-N) and comparison to an endo-N homolog in bacteriophage PK1E.</title>
        <authorList>
            <person name="Petter J.G."/>
            <person name="Vimr E.R."/>
        </authorList>
    </citation>
    <scope>NUCLEOTIDE SEQUENCE</scope>
    <scope>PROTEIN SEQUENCE OF 2-31 AND 917-920</scope>
    <scope>SUBCELLULAR LOCATION (MATURE TAIL SPIKE PROTEIN)</scope>
</reference>
<reference key="2">
    <citation type="journal article" date="2003" name="J. Biol. Chem.">
        <title>Proteolytic processing and oligomerization of bacteriophage-derived endosialidases.</title>
        <authorList>
            <person name="Muehlenhoff M."/>
            <person name="Stummeyer K."/>
            <person name="Grove M."/>
            <person name="Sauerborn M."/>
            <person name="Gerardy-Schahn R."/>
        </authorList>
    </citation>
    <scope>NUCLEOTIDE SEQUENCE [GENOMIC DNA]</scope>
    <scope>PROTEIN SEQUENCE OF 913-922</scope>
    <scope>IDENTIFICATION (TAIL SPIKE PROTEIN)</scope>
    <scope>PROTEOLYTIC CLEAVAGE (TAIL SPIKE PROTEIN)</scope>
    <scope>CATALYTIC ACTIVITY (TAIL SPIKE PROTEIN)</scope>
    <scope>FUNCTION (INTRAMOLECULAR CHAPERONE)</scope>
</reference>
<reference key="3">
    <citation type="journal article" date="2005" name="J. Bacteriol.">
        <title>The genome of bacteriophage K1F, a T7-like phage that has acquired the ability to replicate on K1 strains of Escherichia coli.</title>
        <authorList>
            <person name="Scholl D."/>
            <person name="Merril C."/>
        </authorList>
    </citation>
    <scope>NUCLEOTIDE SEQUENCE [LARGE SCALE GENOMIC DNA]</scope>
</reference>
<reference key="4">
    <citation type="journal article" date="2006" name="Mol. Microbiol.">
        <title>Evolution of bacteriophages infecting encapsulated bacteria: lessons from Escherichia coli K1-specific phages.</title>
        <authorList>
            <person name="Stummeyer K."/>
            <person name="Schwarzer D."/>
            <person name="Claus H."/>
            <person name="Vogel U."/>
            <person name="Gerardy-Schahn R."/>
            <person name="Muhlenhoff M."/>
        </authorList>
    </citation>
    <scope>NUCLEOTIDE SEQUENCE [LARGE SCALE GENOMIC DNA]</scope>
</reference>
<reference key="5">
    <citation type="journal article" date="1987" name="J. Biol. Chem.">
        <title>Purification and properties of a bacteriophage-induced endo-N-acetylneuraminidase specific for poly-alpha-2,8-sialosyl carbohydrate units.</title>
        <authorList>
            <person name="Hallenbeck P.C."/>
            <person name="Vimr E.R."/>
            <person name="Yu F."/>
            <person name="Bassler B."/>
            <person name="Troy F.A."/>
        </authorList>
    </citation>
    <scope>CHARACTERIZATION</scope>
    <scope>FUNCTION (MATURE TAIL SPIKE PROTEIN)</scope>
    <scope>CATALYTIC ACTIVITY (MATURE TAIL SPIKE PROTEIN)</scope>
    <scope>SUBUNIT (MATURE TAIL SPIKE PROTEIN)</scope>
    <scope>BIOPHYSICOCHEMICAL PROPERTIES (MATURE TAIL SPIKE PROTEIN)</scope>
</reference>
<reference key="6">
    <citation type="journal article" date="2009" name="J. Biol. Chem.">
        <title>Proteolytic release of the intramolecular chaperone domain confers processivity to endosialidase F.</title>
        <authorList>
            <person name="Schwarzer D."/>
            <person name="Stummeyer K."/>
            <person name="Haselhorst T."/>
            <person name="Freiberger F."/>
            <person name="Rode B."/>
            <person name="Grove M."/>
            <person name="Scheper T."/>
            <person name="von Itzstein M."/>
            <person name="Muehlenhoff M."/>
            <person name="Gerardy-Schahn R."/>
        </authorList>
    </citation>
    <scope>PROTEOLYTIC CLEAVAGE (TAIL SPIKE PROTEIN)</scope>
    <scope>CATALYTIC ACTIVITY (MATURE TAIL SPIKE PROTEIN)</scope>
    <scope>MUTAGENESIS OF SER-911</scope>
</reference>
<reference evidence="14 15" key="7">
    <citation type="journal article" date="2005" name="Nat. Struct. Mol. Biol.">
        <title>Crystal structure of the polysialic acid-degrading endosialidase of bacteriophage K1F.</title>
        <authorList>
            <person name="Stummeyer K."/>
            <person name="Dickmanns A."/>
            <person name="Muhlenhoff M."/>
            <person name="Gerardy-Schahn R."/>
            <person name="Ficner R."/>
        </authorList>
    </citation>
    <scope>X-RAY CRYSTALLOGRAPHY (1.90 ANGSTROMS) OF 246-910</scope>
    <scope>INTERACTION WITH SIALIC ACID (MATURE TAIL SPIKE PROTEIN)</scope>
    <scope>SUBUNIT (MATURE TAIL SPIKE PROTEIN)</scope>
    <scope>MUTAGENESIS OF GLU-581; ARG-596 AND ARG-647</scope>
    <scope>ACTIVE SITE (MATURE TAIL SPIKE PROTEIN)</scope>
</reference>
<reference evidence="19" key="8">
    <citation type="journal article" date="2010" name="Acta Crystallogr. D">
        <title>Structure analysis of endosialidase NF at 0.98 A resolution.</title>
        <authorList>
            <person name="Schulz E.C."/>
            <person name="Neumann P."/>
            <person name="Gerardy-Schahn R."/>
            <person name="Sheldrick G.M."/>
            <person name="Ficner R."/>
        </authorList>
    </citation>
    <scope>X-RAY CRYSTALLOGRAPHY (0.98 ANGSTROMS) OF 246-910</scope>
    <scope>SUBUNIT</scope>
</reference>
<reference evidence="16 17 18" key="9">
    <citation type="journal article" date="2010" name="J. Mol. Biol.">
        <title>Structural basis for the recognition and cleavage of polysialic acid by the bacteriophage K1F tailspike protein EndoNF.</title>
        <authorList>
            <person name="Schulz E.C."/>
            <person name="Schwarzer D."/>
            <person name="Frank M."/>
            <person name="Stummeyer K."/>
            <person name="Muhlenhoff M."/>
            <person name="Dickmanns A."/>
            <person name="Gerardy-Schahn R."/>
            <person name="Ficner R."/>
        </authorList>
    </citation>
    <scope>X-RAY CRYSTALLOGRAPHY (1.41 ANGSTROMS) OF 246-910 IN COMPLEX WITH OLIGOMERIC SIALIC ACID</scope>
    <scope>ACTIVE SITE (MATURE TAIL SPIKE PROTEIN)</scope>
    <scope>MUTAGENESIS OF TRP-328; HIS-350; LYS-410; HIS-542; ARG-549; GLU-581 AND ARG-647</scope>
    <scope>INTERACTION WITH SIALIC ACID (MATURE TAIL SPIKE PROTEIN)</scope>
    <scope>FUNCTION (MATURE TAIL SPIKE PROTEIN)</scope>
</reference>